<comment type="subcellular location">
    <subcellularLocation>
        <location evidence="2">Host membrane</location>
        <topology evidence="2">Single-pass membrane protein</topology>
    </subcellularLocation>
</comment>
<comment type="similarity">
    <text evidence="2">Belongs to the asfivirus C84L family.</text>
</comment>
<evidence type="ECO:0000255" key="1"/>
<evidence type="ECO:0000305" key="2"/>
<gene>
    <name type="ordered locus">Ken-075</name>
</gene>
<reference key="1">
    <citation type="submission" date="2003-03" db="EMBL/GenBank/DDBJ databases">
        <title>African swine fever virus genomes.</title>
        <authorList>
            <person name="Kutish G.F."/>
            <person name="Rock D.L."/>
        </authorList>
    </citation>
    <scope>NUCLEOTIDE SEQUENCE [LARGE SCALE GENOMIC DNA]</scope>
</reference>
<name>VF84L_ASFK5</name>
<organismHost>
    <name type="scientific">Ornithodoros</name>
    <name type="common">relapsing fever ticks</name>
    <dbReference type="NCBI Taxonomy" id="6937"/>
</organismHost>
<organismHost>
    <name type="scientific">Phacochoerus aethiopicus</name>
    <name type="common">Warthog</name>
    <dbReference type="NCBI Taxonomy" id="85517"/>
</organismHost>
<organismHost>
    <name type="scientific">Phacochoerus africanus</name>
    <name type="common">Warthog</name>
    <dbReference type="NCBI Taxonomy" id="41426"/>
</organismHost>
<organismHost>
    <name type="scientific">Potamochoerus larvatus</name>
    <name type="common">Bushpig</name>
    <dbReference type="NCBI Taxonomy" id="273792"/>
</organismHost>
<organismHost>
    <name type="scientific">Sus scrofa</name>
    <name type="common">Pig</name>
    <dbReference type="NCBI Taxonomy" id="9823"/>
</organismHost>
<organism>
    <name type="scientific">African swine fever virus (isolate Pig/Kenya/KEN-50/1950)</name>
    <name type="common">ASFV</name>
    <dbReference type="NCBI Taxonomy" id="561445"/>
    <lineage>
        <taxon>Viruses</taxon>
        <taxon>Varidnaviria</taxon>
        <taxon>Bamfordvirae</taxon>
        <taxon>Nucleocytoviricota</taxon>
        <taxon>Pokkesviricetes</taxon>
        <taxon>Asfuvirales</taxon>
        <taxon>Asfarviridae</taxon>
        <taxon>Asfivirus</taxon>
        <taxon>African swine fever virus</taxon>
    </lineage>
</organism>
<sequence>MMMFITGYDINQKQKKRYGLRG</sequence>
<protein>
    <recommendedName>
        <fullName>Uncharacterized protein C84L</fullName>
        <shortName>pC84L</shortName>
    </recommendedName>
</protein>
<proteinExistence type="inferred from homology"/>
<feature type="chain" id="PRO_0000373740" description="Uncharacterized protein C84L">
    <location>
        <begin position="1"/>
        <end position="22"/>
    </location>
</feature>
<feature type="transmembrane region" description="Helical" evidence="1">
    <location>
        <begin position="3"/>
        <end position="22"/>
    </location>
</feature>
<dbReference type="EMBL" id="AY261360">
    <property type="status" value="NOT_ANNOTATED_CDS"/>
    <property type="molecule type" value="Genomic_DNA"/>
</dbReference>
<dbReference type="Proteomes" id="UP000000861">
    <property type="component" value="Segment"/>
</dbReference>
<dbReference type="GO" id="GO:0033644">
    <property type="term" value="C:host cell membrane"/>
    <property type="evidence" value="ECO:0007669"/>
    <property type="project" value="UniProtKB-SubCell"/>
</dbReference>
<dbReference type="GO" id="GO:0016020">
    <property type="term" value="C:membrane"/>
    <property type="evidence" value="ECO:0007669"/>
    <property type="project" value="UniProtKB-KW"/>
</dbReference>
<keyword id="KW-1043">Host membrane</keyword>
<keyword id="KW-0472">Membrane</keyword>
<keyword id="KW-0812">Transmembrane</keyword>
<keyword id="KW-1133">Transmembrane helix</keyword>
<accession>P0CAL0</accession>